<evidence type="ECO:0000255" key="1">
    <source>
        <dbReference type="HAMAP-Rule" id="MF_00213"/>
    </source>
</evidence>
<dbReference type="EMBL" id="CP000510">
    <property type="protein sequence ID" value="ABM03045.1"/>
    <property type="molecule type" value="Genomic_DNA"/>
</dbReference>
<dbReference type="RefSeq" id="WP_011769608.1">
    <property type="nucleotide sequence ID" value="NC_008709.1"/>
</dbReference>
<dbReference type="SMR" id="A1SU80"/>
<dbReference type="STRING" id="357804.Ping_1213"/>
<dbReference type="KEGG" id="pin:Ping_1213"/>
<dbReference type="eggNOG" id="COG0375">
    <property type="taxonomic scope" value="Bacteria"/>
</dbReference>
<dbReference type="HOGENOM" id="CLU_126929_0_0_6"/>
<dbReference type="OrthoDB" id="288014at2"/>
<dbReference type="Proteomes" id="UP000000639">
    <property type="component" value="Chromosome"/>
</dbReference>
<dbReference type="GO" id="GO:0016151">
    <property type="term" value="F:nickel cation binding"/>
    <property type="evidence" value="ECO:0007669"/>
    <property type="project" value="UniProtKB-UniRule"/>
</dbReference>
<dbReference type="GO" id="GO:0008270">
    <property type="term" value="F:zinc ion binding"/>
    <property type="evidence" value="ECO:0007669"/>
    <property type="project" value="UniProtKB-UniRule"/>
</dbReference>
<dbReference type="GO" id="GO:0051604">
    <property type="term" value="P:protein maturation"/>
    <property type="evidence" value="ECO:0007669"/>
    <property type="project" value="InterPro"/>
</dbReference>
<dbReference type="GO" id="GO:0036211">
    <property type="term" value="P:protein modification process"/>
    <property type="evidence" value="ECO:0007669"/>
    <property type="project" value="UniProtKB-UniRule"/>
</dbReference>
<dbReference type="Gene3D" id="3.30.2320.80">
    <property type="match status" value="1"/>
</dbReference>
<dbReference type="HAMAP" id="MF_00213">
    <property type="entry name" value="HypA_HybF"/>
    <property type="match status" value="1"/>
</dbReference>
<dbReference type="InterPro" id="IPR020538">
    <property type="entry name" value="Hydgase_Ni_incorp_HypA/HybF_CS"/>
</dbReference>
<dbReference type="InterPro" id="IPR000688">
    <property type="entry name" value="HypA/HybF"/>
</dbReference>
<dbReference type="NCBIfam" id="TIGR00100">
    <property type="entry name" value="hypA"/>
    <property type="match status" value="1"/>
</dbReference>
<dbReference type="PANTHER" id="PTHR34535">
    <property type="entry name" value="HYDROGENASE MATURATION FACTOR HYPA"/>
    <property type="match status" value="1"/>
</dbReference>
<dbReference type="PANTHER" id="PTHR34535:SF3">
    <property type="entry name" value="HYDROGENASE MATURATION FACTOR HYPA"/>
    <property type="match status" value="1"/>
</dbReference>
<dbReference type="Pfam" id="PF01155">
    <property type="entry name" value="HypA"/>
    <property type="match status" value="1"/>
</dbReference>
<dbReference type="PIRSF" id="PIRSF004761">
    <property type="entry name" value="Hydrgn_mat_HypA"/>
    <property type="match status" value="1"/>
</dbReference>
<dbReference type="PROSITE" id="PS01249">
    <property type="entry name" value="HYPA"/>
    <property type="match status" value="1"/>
</dbReference>
<name>HYPA_PSYIN</name>
<reference key="1">
    <citation type="journal article" date="2008" name="BMC Genomics">
        <title>Genomics of an extreme psychrophile, Psychromonas ingrahamii.</title>
        <authorList>
            <person name="Riley M."/>
            <person name="Staley J.T."/>
            <person name="Danchin A."/>
            <person name="Wang T.Z."/>
            <person name="Brettin T.S."/>
            <person name="Hauser L.J."/>
            <person name="Land M.L."/>
            <person name="Thompson L.S."/>
        </authorList>
    </citation>
    <scope>NUCLEOTIDE SEQUENCE [LARGE SCALE GENOMIC DNA]</scope>
    <source>
        <strain>DSM 17664 / CCUG 51855 / 37</strain>
    </source>
</reference>
<feature type="chain" id="PRO_1000023850" description="Hydrogenase maturation factor HypA">
    <location>
        <begin position="1"/>
        <end position="114"/>
    </location>
</feature>
<feature type="binding site" evidence="1">
    <location>
        <position position="2"/>
    </location>
    <ligand>
        <name>Ni(2+)</name>
        <dbReference type="ChEBI" id="CHEBI:49786"/>
    </ligand>
</feature>
<feature type="binding site" evidence="1">
    <location>
        <position position="73"/>
    </location>
    <ligand>
        <name>Zn(2+)</name>
        <dbReference type="ChEBI" id="CHEBI:29105"/>
    </ligand>
</feature>
<feature type="binding site" evidence="1">
    <location>
        <position position="76"/>
    </location>
    <ligand>
        <name>Zn(2+)</name>
        <dbReference type="ChEBI" id="CHEBI:29105"/>
    </ligand>
</feature>
<feature type="binding site" evidence="1">
    <location>
        <position position="89"/>
    </location>
    <ligand>
        <name>Zn(2+)</name>
        <dbReference type="ChEBI" id="CHEBI:29105"/>
    </ligand>
</feature>
<feature type="binding site" evidence="1">
    <location>
        <position position="92"/>
    </location>
    <ligand>
        <name>Zn(2+)</name>
        <dbReference type="ChEBI" id="CHEBI:29105"/>
    </ligand>
</feature>
<organism>
    <name type="scientific">Psychromonas ingrahamii (strain DSM 17664 / CCUG 51855 / 37)</name>
    <dbReference type="NCBI Taxonomy" id="357804"/>
    <lineage>
        <taxon>Bacteria</taxon>
        <taxon>Pseudomonadati</taxon>
        <taxon>Pseudomonadota</taxon>
        <taxon>Gammaproteobacteria</taxon>
        <taxon>Alteromonadales</taxon>
        <taxon>Psychromonadaceae</taxon>
        <taxon>Psychromonas</taxon>
    </lineage>
</organism>
<gene>
    <name evidence="1" type="primary">hypA</name>
    <name type="ordered locus">Ping_1213</name>
</gene>
<sequence length="114" mass="12662">MHELSIAESIIELLEEHAVTHKFKKVTKIILEIGVLAGIEKSALFFCFDVAAQNSLAEGAELLIEDKLAQGVCQNCHLQVTTTGWYEPCPYCGQLLINITEGEQMKIKSLEVEN</sequence>
<keyword id="KW-0479">Metal-binding</keyword>
<keyword id="KW-0533">Nickel</keyword>
<keyword id="KW-1185">Reference proteome</keyword>
<keyword id="KW-0862">Zinc</keyword>
<protein>
    <recommendedName>
        <fullName evidence="1">Hydrogenase maturation factor HypA</fullName>
    </recommendedName>
</protein>
<accession>A1SU80</accession>
<comment type="function">
    <text evidence="1">Involved in the maturation of [NiFe] hydrogenases. Required for nickel insertion into the metal center of the hydrogenase.</text>
</comment>
<comment type="similarity">
    <text evidence="1">Belongs to the HypA/HybF family.</text>
</comment>
<proteinExistence type="inferred from homology"/>